<reference key="1">
    <citation type="journal article" date="2009" name="BMC Genomics">
        <title>Pseudogene accumulation in the evolutionary histories of Salmonella enterica serovars Paratyphi A and Typhi.</title>
        <authorList>
            <person name="Holt K.E."/>
            <person name="Thomson N.R."/>
            <person name="Wain J."/>
            <person name="Langridge G.C."/>
            <person name="Hasan R."/>
            <person name="Bhutta Z.A."/>
            <person name="Quail M.A."/>
            <person name="Norbertczak H."/>
            <person name="Walker D."/>
            <person name="Simmonds M."/>
            <person name="White B."/>
            <person name="Bason N."/>
            <person name="Mungall K."/>
            <person name="Dougan G."/>
            <person name="Parkhill J."/>
        </authorList>
    </citation>
    <scope>NUCLEOTIDE SEQUENCE [LARGE SCALE GENOMIC DNA]</scope>
    <source>
        <strain>AKU_12601</strain>
    </source>
</reference>
<feature type="chain" id="PRO_1000140426" description="4-hydroxy-2-oxo-heptane-1,7-dioate aldolase">
    <location>
        <begin position="1"/>
        <end position="263"/>
    </location>
</feature>
<feature type="active site" description="Proton acceptor" evidence="1">
    <location>
        <position position="45"/>
    </location>
</feature>
<feature type="binding site" evidence="1">
    <location>
        <position position="147"/>
    </location>
    <ligand>
        <name>substrate</name>
    </ligand>
</feature>
<feature type="binding site" evidence="1">
    <location>
        <position position="149"/>
    </location>
    <ligand>
        <name>a divalent metal cation</name>
        <dbReference type="ChEBI" id="CHEBI:60240"/>
    </ligand>
</feature>
<feature type="binding site" evidence="1">
    <location>
        <position position="174"/>
    </location>
    <ligand>
        <name>substrate</name>
    </ligand>
</feature>
<feature type="binding site" evidence="1">
    <location>
        <position position="175"/>
    </location>
    <ligand>
        <name>a divalent metal cation</name>
        <dbReference type="ChEBI" id="CHEBI:60240"/>
    </ligand>
</feature>
<feature type="binding site" evidence="1">
    <location>
        <position position="175"/>
    </location>
    <ligand>
        <name>substrate</name>
    </ligand>
</feature>
<feature type="site" description="Transition state stabilizer" evidence="1">
    <location>
        <position position="70"/>
    </location>
</feature>
<feature type="site" description="Increases basicity of active site His" evidence="1">
    <location>
        <position position="84"/>
    </location>
</feature>
<evidence type="ECO:0000255" key="1">
    <source>
        <dbReference type="HAMAP-Rule" id="MF_01292"/>
    </source>
</evidence>
<sequence>MKNAFKDALKAGRPQIGLWLGLANSYSAELLAGAGFDWLLIDGEHAPNNVQTVLTQLQAIAPYPSQPVVRPSWNDPVQIKQLLDVGAQTLLIPMVQNADEARNAVAATRYPPAGIRGVGSALARASRWNRIPDYLHLANDAMCVLVQIETREAMSNLASILDVDGIDGVFIGPADLSADMGFAGNPQHPEVQAAIENAIVQIRAAGKAPGILMANEALAKRYLELGALFVAVGVDTTLLARGAEALAARFGAEKNLSGASGVY</sequence>
<protein>
    <recommendedName>
        <fullName evidence="1">4-hydroxy-2-oxo-heptane-1,7-dioate aldolase</fullName>
        <ecNumber evidence="1">4.1.2.52</ecNumber>
    </recommendedName>
    <alternativeName>
        <fullName evidence="1">2,4-dihydroxyhept-2-ene-1,7-dioic acid aldolase</fullName>
        <shortName evidence="1">HHED aldolase</shortName>
    </alternativeName>
    <alternativeName>
        <fullName evidence="1">4-hydroxy-2-ketoheptane-1,7-dioate aldolase</fullName>
        <shortName evidence="1">HKHD aldolase</shortName>
    </alternativeName>
</protein>
<comment type="function">
    <text evidence="1">Catalyzes the reversible retro-aldol cleavage of 4-hydroxy-2-ketoheptane-1,7-dioate (HKHD) to pyruvate and succinic semialdehyde.</text>
</comment>
<comment type="catalytic activity">
    <reaction evidence="1">
        <text>4-hydroxy-2-oxoheptanedioate = succinate semialdehyde + pyruvate</text>
        <dbReference type="Rhea" id="RHEA:25788"/>
        <dbReference type="ChEBI" id="CHEBI:15361"/>
        <dbReference type="ChEBI" id="CHEBI:57706"/>
        <dbReference type="ChEBI" id="CHEBI:73036"/>
        <dbReference type="EC" id="4.1.2.52"/>
    </reaction>
</comment>
<comment type="cofactor">
    <cofactor evidence="1">
        <name>a divalent metal cation</name>
        <dbReference type="ChEBI" id="CHEBI:60240"/>
    </cofactor>
    <text evidence="1">Binds 1 divalent metal cation per subunit.</text>
</comment>
<comment type="pathway">
    <text evidence="1">Aromatic compound metabolism; 4-hydroxyphenylacetate degradation; pyruvate and succinate semialdehyde from 4-hydroxyphenylacetate: step 7/7.</text>
</comment>
<comment type="subunit">
    <text evidence="1">Homohexamer; trimer of dimers.</text>
</comment>
<comment type="similarity">
    <text evidence="1">Belongs to the HpcH/HpaI aldolase family.</text>
</comment>
<accession>B5BBH8</accession>
<gene>
    <name evidence="1" type="primary">hpcH</name>
    <name evidence="1" type="synonym">hpaI</name>
    <name type="ordered locus">SSPA1621</name>
</gene>
<organism>
    <name type="scientific">Salmonella paratyphi A (strain AKU_12601)</name>
    <dbReference type="NCBI Taxonomy" id="554290"/>
    <lineage>
        <taxon>Bacteria</taxon>
        <taxon>Pseudomonadati</taxon>
        <taxon>Pseudomonadota</taxon>
        <taxon>Gammaproteobacteria</taxon>
        <taxon>Enterobacterales</taxon>
        <taxon>Enterobacteriaceae</taxon>
        <taxon>Salmonella</taxon>
    </lineage>
</organism>
<keyword id="KW-0058">Aromatic hydrocarbons catabolism</keyword>
<keyword id="KW-0456">Lyase</keyword>
<keyword id="KW-0479">Metal-binding</keyword>
<name>HPCH_SALPK</name>
<proteinExistence type="inferred from homology"/>
<dbReference type="EC" id="4.1.2.52" evidence="1"/>
<dbReference type="EMBL" id="FM200053">
    <property type="protein sequence ID" value="CAR59810.1"/>
    <property type="molecule type" value="Genomic_DNA"/>
</dbReference>
<dbReference type="RefSeq" id="WP_000785059.1">
    <property type="nucleotide sequence ID" value="NC_011147.1"/>
</dbReference>
<dbReference type="SMR" id="B5BBH8"/>
<dbReference type="KEGG" id="sek:SSPA1621"/>
<dbReference type="HOGENOM" id="CLU_059964_1_0_6"/>
<dbReference type="UniPathway" id="UPA00208">
    <property type="reaction ID" value="UER00422"/>
</dbReference>
<dbReference type="Proteomes" id="UP000001869">
    <property type="component" value="Chromosome"/>
</dbReference>
<dbReference type="GO" id="GO:0005737">
    <property type="term" value="C:cytoplasm"/>
    <property type="evidence" value="ECO:0007669"/>
    <property type="project" value="TreeGrafter"/>
</dbReference>
<dbReference type="GO" id="GO:0043863">
    <property type="term" value="F:4-hydroxy-2-ketopimelate aldolase activity"/>
    <property type="evidence" value="ECO:0007669"/>
    <property type="project" value="RHEA"/>
</dbReference>
<dbReference type="GO" id="GO:0046872">
    <property type="term" value="F:metal ion binding"/>
    <property type="evidence" value="ECO:0007669"/>
    <property type="project" value="UniProtKB-UniRule"/>
</dbReference>
<dbReference type="GO" id="GO:1901023">
    <property type="term" value="P:4-hydroxyphenylacetate catabolic process"/>
    <property type="evidence" value="ECO:0007669"/>
    <property type="project" value="UniProtKB-UniRule"/>
</dbReference>
<dbReference type="GO" id="GO:0010124">
    <property type="term" value="P:phenylacetate catabolic process"/>
    <property type="evidence" value="ECO:0007669"/>
    <property type="project" value="InterPro"/>
</dbReference>
<dbReference type="FunFam" id="3.20.20.60:FF:000004">
    <property type="entry name" value="5-keto-4-deoxy-D-glucarate aldolase"/>
    <property type="match status" value="1"/>
</dbReference>
<dbReference type="Gene3D" id="3.20.20.60">
    <property type="entry name" value="Phosphoenolpyruvate-binding domains"/>
    <property type="match status" value="1"/>
</dbReference>
<dbReference type="HAMAP" id="MF_01292">
    <property type="entry name" value="HKHD_aldolase"/>
    <property type="match status" value="1"/>
</dbReference>
<dbReference type="InterPro" id="IPR005000">
    <property type="entry name" value="Aldolase/citrate-lyase_domain"/>
</dbReference>
<dbReference type="InterPro" id="IPR023701">
    <property type="entry name" value="HKHD_aldolase_ent"/>
</dbReference>
<dbReference type="InterPro" id="IPR012689">
    <property type="entry name" value="HpaI"/>
</dbReference>
<dbReference type="InterPro" id="IPR050251">
    <property type="entry name" value="HpcH-HpaI_aldolase"/>
</dbReference>
<dbReference type="InterPro" id="IPR015813">
    <property type="entry name" value="Pyrv/PenolPyrv_kinase-like_dom"/>
</dbReference>
<dbReference type="InterPro" id="IPR040442">
    <property type="entry name" value="Pyrv_kinase-like_dom_sf"/>
</dbReference>
<dbReference type="NCBIfam" id="TIGR02311">
    <property type="entry name" value="HpaI"/>
    <property type="match status" value="1"/>
</dbReference>
<dbReference type="PANTHER" id="PTHR30502">
    <property type="entry name" value="2-KETO-3-DEOXY-L-RHAMNONATE ALDOLASE"/>
    <property type="match status" value="1"/>
</dbReference>
<dbReference type="PANTHER" id="PTHR30502:SF0">
    <property type="entry name" value="PHOSPHOENOLPYRUVATE CARBOXYLASE FAMILY PROTEIN"/>
    <property type="match status" value="1"/>
</dbReference>
<dbReference type="Pfam" id="PF03328">
    <property type="entry name" value="HpcH_HpaI"/>
    <property type="match status" value="1"/>
</dbReference>
<dbReference type="SUPFAM" id="SSF51621">
    <property type="entry name" value="Phosphoenolpyruvate/pyruvate domain"/>
    <property type="match status" value="1"/>
</dbReference>